<name>APT_MYCA1</name>
<protein>
    <recommendedName>
        <fullName evidence="1">Adenine phosphoribosyltransferase</fullName>
        <shortName evidence="1">APRT</shortName>
        <ecNumber evidence="1">2.4.2.7</ecNumber>
    </recommendedName>
</protein>
<dbReference type="EC" id="2.4.2.7" evidence="1"/>
<dbReference type="EMBL" id="CP000479">
    <property type="protein sequence ID" value="ABK68743.1"/>
    <property type="molecule type" value="Genomic_DNA"/>
</dbReference>
<dbReference type="RefSeq" id="WP_011725485.1">
    <property type="nucleotide sequence ID" value="NC_008595.1"/>
</dbReference>
<dbReference type="SMR" id="A0QIA9"/>
<dbReference type="KEGG" id="mav:MAV_3465"/>
<dbReference type="HOGENOM" id="CLU_063339_3_3_11"/>
<dbReference type="UniPathway" id="UPA00588">
    <property type="reaction ID" value="UER00646"/>
</dbReference>
<dbReference type="Proteomes" id="UP000001574">
    <property type="component" value="Chromosome"/>
</dbReference>
<dbReference type="GO" id="GO:0005737">
    <property type="term" value="C:cytoplasm"/>
    <property type="evidence" value="ECO:0007669"/>
    <property type="project" value="UniProtKB-SubCell"/>
</dbReference>
<dbReference type="GO" id="GO:0002055">
    <property type="term" value="F:adenine binding"/>
    <property type="evidence" value="ECO:0007669"/>
    <property type="project" value="TreeGrafter"/>
</dbReference>
<dbReference type="GO" id="GO:0003999">
    <property type="term" value="F:adenine phosphoribosyltransferase activity"/>
    <property type="evidence" value="ECO:0007669"/>
    <property type="project" value="UniProtKB-UniRule"/>
</dbReference>
<dbReference type="GO" id="GO:0016208">
    <property type="term" value="F:AMP binding"/>
    <property type="evidence" value="ECO:0007669"/>
    <property type="project" value="TreeGrafter"/>
</dbReference>
<dbReference type="GO" id="GO:0006168">
    <property type="term" value="P:adenine salvage"/>
    <property type="evidence" value="ECO:0007669"/>
    <property type="project" value="InterPro"/>
</dbReference>
<dbReference type="GO" id="GO:0044209">
    <property type="term" value="P:AMP salvage"/>
    <property type="evidence" value="ECO:0007669"/>
    <property type="project" value="UniProtKB-UniRule"/>
</dbReference>
<dbReference type="GO" id="GO:0006166">
    <property type="term" value="P:purine ribonucleoside salvage"/>
    <property type="evidence" value="ECO:0007669"/>
    <property type="project" value="UniProtKB-KW"/>
</dbReference>
<dbReference type="CDD" id="cd06223">
    <property type="entry name" value="PRTases_typeI"/>
    <property type="match status" value="1"/>
</dbReference>
<dbReference type="FunFam" id="3.40.50.2020:FF:000021">
    <property type="entry name" value="Adenine phosphoribosyltransferase"/>
    <property type="match status" value="1"/>
</dbReference>
<dbReference type="Gene3D" id="3.40.50.2020">
    <property type="match status" value="1"/>
</dbReference>
<dbReference type="HAMAP" id="MF_00004">
    <property type="entry name" value="Aden_phosphoribosyltr"/>
    <property type="match status" value="1"/>
</dbReference>
<dbReference type="InterPro" id="IPR005764">
    <property type="entry name" value="Ade_phspho_trans"/>
</dbReference>
<dbReference type="InterPro" id="IPR000836">
    <property type="entry name" value="PRibTrfase_dom"/>
</dbReference>
<dbReference type="InterPro" id="IPR029057">
    <property type="entry name" value="PRTase-like"/>
</dbReference>
<dbReference type="InterPro" id="IPR050054">
    <property type="entry name" value="UPRTase/APRTase"/>
</dbReference>
<dbReference type="NCBIfam" id="NF002636">
    <property type="entry name" value="PRK02304.1-5"/>
    <property type="match status" value="1"/>
</dbReference>
<dbReference type="PANTHER" id="PTHR32315">
    <property type="entry name" value="ADENINE PHOSPHORIBOSYLTRANSFERASE"/>
    <property type="match status" value="1"/>
</dbReference>
<dbReference type="PANTHER" id="PTHR32315:SF3">
    <property type="entry name" value="ADENINE PHOSPHORIBOSYLTRANSFERASE"/>
    <property type="match status" value="1"/>
</dbReference>
<dbReference type="Pfam" id="PF00156">
    <property type="entry name" value="Pribosyltran"/>
    <property type="match status" value="1"/>
</dbReference>
<dbReference type="SUPFAM" id="SSF53271">
    <property type="entry name" value="PRTase-like"/>
    <property type="match status" value="1"/>
</dbReference>
<dbReference type="PROSITE" id="PS00103">
    <property type="entry name" value="PUR_PYR_PR_TRANSFER"/>
    <property type="match status" value="1"/>
</dbReference>
<evidence type="ECO:0000255" key="1">
    <source>
        <dbReference type="HAMAP-Rule" id="MF_00004"/>
    </source>
</evidence>
<proteinExistence type="inferred from homology"/>
<reference key="1">
    <citation type="submission" date="2006-10" db="EMBL/GenBank/DDBJ databases">
        <authorList>
            <person name="Fleischmann R.D."/>
            <person name="Dodson R.J."/>
            <person name="Haft D.H."/>
            <person name="Merkel J.S."/>
            <person name="Nelson W.C."/>
            <person name="Fraser C.M."/>
        </authorList>
    </citation>
    <scope>NUCLEOTIDE SEQUENCE [LARGE SCALE GENOMIC DNA]</scope>
    <source>
        <strain>104</strain>
    </source>
</reference>
<accession>A0QIA9</accession>
<keyword id="KW-0963">Cytoplasm</keyword>
<keyword id="KW-0328">Glycosyltransferase</keyword>
<keyword id="KW-0660">Purine salvage</keyword>
<keyword id="KW-0808">Transferase</keyword>
<organism>
    <name type="scientific">Mycobacterium avium (strain 104)</name>
    <dbReference type="NCBI Taxonomy" id="243243"/>
    <lineage>
        <taxon>Bacteria</taxon>
        <taxon>Bacillati</taxon>
        <taxon>Actinomycetota</taxon>
        <taxon>Actinomycetes</taxon>
        <taxon>Mycobacteriales</taxon>
        <taxon>Mycobacteriaceae</taxon>
        <taxon>Mycobacterium</taxon>
        <taxon>Mycobacterium avium complex (MAC)</taxon>
    </lineage>
</organism>
<gene>
    <name evidence="1" type="primary">apt</name>
    <name type="ordered locus">MAV_3465</name>
</gene>
<comment type="function">
    <text evidence="1">Catalyzes a salvage reaction resulting in the formation of AMP, that is energically less costly than de novo synthesis.</text>
</comment>
<comment type="catalytic activity">
    <reaction evidence="1">
        <text>AMP + diphosphate = 5-phospho-alpha-D-ribose 1-diphosphate + adenine</text>
        <dbReference type="Rhea" id="RHEA:16609"/>
        <dbReference type="ChEBI" id="CHEBI:16708"/>
        <dbReference type="ChEBI" id="CHEBI:33019"/>
        <dbReference type="ChEBI" id="CHEBI:58017"/>
        <dbReference type="ChEBI" id="CHEBI:456215"/>
        <dbReference type="EC" id="2.4.2.7"/>
    </reaction>
</comment>
<comment type="pathway">
    <text evidence="1">Purine metabolism; AMP biosynthesis via salvage pathway; AMP from adenine: step 1/1.</text>
</comment>
<comment type="subunit">
    <text evidence="1">Homodimer.</text>
</comment>
<comment type="subcellular location">
    <subcellularLocation>
        <location evidence="1">Cytoplasm</location>
    </subcellularLocation>
</comment>
<comment type="similarity">
    <text evidence="1">Belongs to the purine/pyrimidine phosphoribosyltransferase family.</text>
</comment>
<feature type="chain" id="PRO_1000000307" description="Adenine phosphoribosyltransferase">
    <location>
        <begin position="1"/>
        <end position="180"/>
    </location>
</feature>
<sequence>MTDAGEATPVAELIASLTRQVPDFPKPGIQFKDLTPLFADATAMTAVTGALARHASGADLVAGIDSRGFLVAAAVADRLHTGVLAIRKGGKLPPPVHAERYDLEYGSATLEIPADGIDLRGRRIVIIDDVLATGGTLAAAARLLRRTGATVTAAAVVFELGALGGRAALAPLPVHRLTCQ</sequence>